<protein>
    <recommendedName>
        <fullName evidence="1">Large ribosomal subunit protein uL1</fullName>
    </recommendedName>
    <alternativeName>
        <fullName evidence="2">50S ribosomal protein L1</fullName>
    </alternativeName>
</protein>
<keyword id="KW-1185">Reference proteome</keyword>
<keyword id="KW-0678">Repressor</keyword>
<keyword id="KW-0687">Ribonucleoprotein</keyword>
<keyword id="KW-0689">Ribosomal protein</keyword>
<keyword id="KW-0694">RNA-binding</keyword>
<keyword id="KW-0699">rRNA-binding</keyword>
<keyword id="KW-0810">Translation regulation</keyword>
<keyword id="KW-0820">tRNA-binding</keyword>
<accession>Q8EK77</accession>
<evidence type="ECO:0000255" key="1">
    <source>
        <dbReference type="HAMAP-Rule" id="MF_01318"/>
    </source>
</evidence>
<evidence type="ECO:0000305" key="2"/>
<sequence length="233" mass="24601">MAKLTKRMRVIREKVDGTKLYEINDAVALLKELATAKFVESVDVAVNLGIDPRKSDQNVRGATVLPHGTGRDVRVAVFTQGANAEAAKAAGAELVGMDDLAEKIKAGEMNFDVVIASPDAMRVVGMLGQILGPRGLMPNPKTGTVTPNVAEAVKNAKAGQVRYRNDKNGIIHTTIGKVDFTPVQLKENLEALISALKKAKPAVAKGVYVKKVSISTTMGAGVAVDQASLETAN</sequence>
<proteinExistence type="inferred from homology"/>
<name>RL1_SHEON</name>
<feature type="chain" id="PRO_0000125729" description="Large ribosomal subunit protein uL1">
    <location>
        <begin position="1"/>
        <end position="233"/>
    </location>
</feature>
<dbReference type="EMBL" id="AE014299">
    <property type="protein sequence ID" value="AAN53306.1"/>
    <property type="molecule type" value="Genomic_DNA"/>
</dbReference>
<dbReference type="RefSeq" id="NP_715861.1">
    <property type="nucleotide sequence ID" value="NC_004347.2"/>
</dbReference>
<dbReference type="RefSeq" id="WP_011070608.1">
    <property type="nucleotide sequence ID" value="NZ_CP053946.1"/>
</dbReference>
<dbReference type="SMR" id="Q8EK77"/>
<dbReference type="STRING" id="211586.SO_0221"/>
<dbReference type="PaxDb" id="211586-SO_0221"/>
<dbReference type="GeneID" id="75190629"/>
<dbReference type="KEGG" id="son:SO_0221"/>
<dbReference type="PATRIC" id="fig|211586.12.peg.209"/>
<dbReference type="eggNOG" id="COG0081">
    <property type="taxonomic scope" value="Bacteria"/>
</dbReference>
<dbReference type="HOGENOM" id="CLU_062853_0_0_6"/>
<dbReference type="OrthoDB" id="9803740at2"/>
<dbReference type="PhylomeDB" id="Q8EK77"/>
<dbReference type="BioCyc" id="SONE211586:G1GMP-210-MONOMER"/>
<dbReference type="Proteomes" id="UP000008186">
    <property type="component" value="Chromosome"/>
</dbReference>
<dbReference type="GO" id="GO:0022625">
    <property type="term" value="C:cytosolic large ribosomal subunit"/>
    <property type="evidence" value="ECO:0000318"/>
    <property type="project" value="GO_Central"/>
</dbReference>
<dbReference type="GO" id="GO:0019843">
    <property type="term" value="F:rRNA binding"/>
    <property type="evidence" value="ECO:0007669"/>
    <property type="project" value="UniProtKB-UniRule"/>
</dbReference>
<dbReference type="GO" id="GO:0003735">
    <property type="term" value="F:structural constituent of ribosome"/>
    <property type="evidence" value="ECO:0007669"/>
    <property type="project" value="InterPro"/>
</dbReference>
<dbReference type="GO" id="GO:0000049">
    <property type="term" value="F:tRNA binding"/>
    <property type="evidence" value="ECO:0007669"/>
    <property type="project" value="UniProtKB-KW"/>
</dbReference>
<dbReference type="GO" id="GO:0006417">
    <property type="term" value="P:regulation of translation"/>
    <property type="evidence" value="ECO:0007669"/>
    <property type="project" value="UniProtKB-KW"/>
</dbReference>
<dbReference type="GO" id="GO:0006412">
    <property type="term" value="P:translation"/>
    <property type="evidence" value="ECO:0007669"/>
    <property type="project" value="UniProtKB-UniRule"/>
</dbReference>
<dbReference type="CDD" id="cd00403">
    <property type="entry name" value="Ribosomal_L1"/>
    <property type="match status" value="1"/>
</dbReference>
<dbReference type="FunFam" id="3.40.50.790:FF:000001">
    <property type="entry name" value="50S ribosomal protein L1"/>
    <property type="match status" value="1"/>
</dbReference>
<dbReference type="Gene3D" id="3.30.190.20">
    <property type="match status" value="1"/>
</dbReference>
<dbReference type="Gene3D" id="3.40.50.790">
    <property type="match status" value="1"/>
</dbReference>
<dbReference type="HAMAP" id="MF_01318_B">
    <property type="entry name" value="Ribosomal_uL1_B"/>
    <property type="match status" value="1"/>
</dbReference>
<dbReference type="InterPro" id="IPR005878">
    <property type="entry name" value="Ribosom_uL1_bac-type"/>
</dbReference>
<dbReference type="InterPro" id="IPR002143">
    <property type="entry name" value="Ribosomal_uL1"/>
</dbReference>
<dbReference type="InterPro" id="IPR023674">
    <property type="entry name" value="Ribosomal_uL1-like"/>
</dbReference>
<dbReference type="InterPro" id="IPR028364">
    <property type="entry name" value="Ribosomal_uL1/biogenesis"/>
</dbReference>
<dbReference type="InterPro" id="IPR016095">
    <property type="entry name" value="Ribosomal_uL1_3-a/b-sand"/>
</dbReference>
<dbReference type="InterPro" id="IPR023673">
    <property type="entry name" value="Ribosomal_uL1_CS"/>
</dbReference>
<dbReference type="NCBIfam" id="TIGR01169">
    <property type="entry name" value="rplA_bact"/>
    <property type="match status" value="1"/>
</dbReference>
<dbReference type="PANTHER" id="PTHR36427">
    <property type="entry name" value="54S RIBOSOMAL PROTEIN L1, MITOCHONDRIAL"/>
    <property type="match status" value="1"/>
</dbReference>
<dbReference type="PANTHER" id="PTHR36427:SF3">
    <property type="entry name" value="LARGE RIBOSOMAL SUBUNIT PROTEIN UL1M"/>
    <property type="match status" value="1"/>
</dbReference>
<dbReference type="Pfam" id="PF00687">
    <property type="entry name" value="Ribosomal_L1"/>
    <property type="match status" value="1"/>
</dbReference>
<dbReference type="PIRSF" id="PIRSF002155">
    <property type="entry name" value="Ribosomal_L1"/>
    <property type="match status" value="1"/>
</dbReference>
<dbReference type="SUPFAM" id="SSF56808">
    <property type="entry name" value="Ribosomal protein L1"/>
    <property type="match status" value="1"/>
</dbReference>
<dbReference type="PROSITE" id="PS01199">
    <property type="entry name" value="RIBOSOMAL_L1"/>
    <property type="match status" value="1"/>
</dbReference>
<gene>
    <name evidence="1" type="primary">rplA</name>
    <name type="ordered locus">SO_0221</name>
</gene>
<reference key="1">
    <citation type="journal article" date="2002" name="Nat. Biotechnol.">
        <title>Genome sequence of the dissimilatory metal ion-reducing bacterium Shewanella oneidensis.</title>
        <authorList>
            <person name="Heidelberg J.F."/>
            <person name="Paulsen I.T."/>
            <person name="Nelson K.E."/>
            <person name="Gaidos E.J."/>
            <person name="Nelson W.C."/>
            <person name="Read T.D."/>
            <person name="Eisen J.A."/>
            <person name="Seshadri R."/>
            <person name="Ward N.L."/>
            <person name="Methe B.A."/>
            <person name="Clayton R.A."/>
            <person name="Meyer T."/>
            <person name="Tsapin A."/>
            <person name="Scott J."/>
            <person name="Beanan M.J."/>
            <person name="Brinkac L.M."/>
            <person name="Daugherty S.C."/>
            <person name="DeBoy R.T."/>
            <person name="Dodson R.J."/>
            <person name="Durkin A.S."/>
            <person name="Haft D.H."/>
            <person name="Kolonay J.F."/>
            <person name="Madupu R."/>
            <person name="Peterson J.D."/>
            <person name="Umayam L.A."/>
            <person name="White O."/>
            <person name="Wolf A.M."/>
            <person name="Vamathevan J.J."/>
            <person name="Weidman J.F."/>
            <person name="Impraim M."/>
            <person name="Lee K."/>
            <person name="Berry K.J."/>
            <person name="Lee C."/>
            <person name="Mueller J."/>
            <person name="Khouri H.M."/>
            <person name="Gill J."/>
            <person name="Utterback T.R."/>
            <person name="McDonald L.A."/>
            <person name="Feldblyum T.V."/>
            <person name="Smith H.O."/>
            <person name="Venter J.C."/>
            <person name="Nealson K.H."/>
            <person name="Fraser C.M."/>
        </authorList>
    </citation>
    <scope>NUCLEOTIDE SEQUENCE [LARGE SCALE GENOMIC DNA]</scope>
    <source>
        <strain>ATCC 700550 / JCM 31522 / CIP 106686 / LMG 19005 / NCIMB 14063 / MR-1</strain>
    </source>
</reference>
<organism>
    <name type="scientific">Shewanella oneidensis (strain ATCC 700550 / JCM 31522 / CIP 106686 / LMG 19005 / NCIMB 14063 / MR-1)</name>
    <dbReference type="NCBI Taxonomy" id="211586"/>
    <lineage>
        <taxon>Bacteria</taxon>
        <taxon>Pseudomonadati</taxon>
        <taxon>Pseudomonadota</taxon>
        <taxon>Gammaproteobacteria</taxon>
        <taxon>Alteromonadales</taxon>
        <taxon>Shewanellaceae</taxon>
        <taxon>Shewanella</taxon>
    </lineage>
</organism>
<comment type="function">
    <text evidence="1">Binds directly to 23S rRNA. The L1 stalk is quite mobile in the ribosome, and is involved in E site tRNA release.</text>
</comment>
<comment type="function">
    <text evidence="1">Protein L1 is also a translational repressor protein, it controls the translation of the L11 operon by binding to its mRNA.</text>
</comment>
<comment type="subunit">
    <text evidence="1">Part of the 50S ribosomal subunit.</text>
</comment>
<comment type="similarity">
    <text evidence="1">Belongs to the universal ribosomal protein uL1 family.</text>
</comment>